<accession>Q9UWW5</accession>
<name>AATE_SACS2</name>
<reference key="1">
    <citation type="journal article" date="2000" name="Genome">
        <title>Gene content and organization of a 281-kbp contig from the genome of the extremely thermophilic archaeon, Sulfolobus solfataricus P2.</title>
        <authorList>
            <person name="Charlebois R.L."/>
            <person name="Singh R.K."/>
            <person name="Chan-Weiher C.C.-Y."/>
            <person name="Allard G."/>
            <person name="Chow C."/>
            <person name="Confalonieri F."/>
            <person name="Curtis B."/>
            <person name="Duguet M."/>
            <person name="Erauso G."/>
            <person name="Faguy D."/>
            <person name="Gaasterland T."/>
            <person name="Garrett R.A."/>
            <person name="Gordon P."/>
            <person name="Jeffries A.C."/>
            <person name="Kozera C."/>
            <person name="Kushwaha N."/>
            <person name="Lafleur E."/>
            <person name="Medina N."/>
            <person name="Peng X."/>
            <person name="Penny S.L."/>
            <person name="She Q."/>
            <person name="St Jean A."/>
            <person name="van der Oost J."/>
            <person name="Young F."/>
            <person name="Zivanovic Y."/>
            <person name="Doolittle W.F."/>
            <person name="Ragan M.A."/>
            <person name="Sensen C.W."/>
        </authorList>
    </citation>
    <scope>NUCLEOTIDE SEQUENCE [LARGE SCALE GENOMIC DNA]</scope>
    <source>
        <strain>ATCC 35092 / DSM 1617 / JCM 11322 / P2</strain>
    </source>
</reference>
<reference key="2">
    <citation type="journal article" date="2001" name="Proc. Natl. Acad. Sci. U.S.A.">
        <title>The complete genome of the crenarchaeon Sulfolobus solfataricus P2.</title>
        <authorList>
            <person name="She Q."/>
            <person name="Singh R.K."/>
            <person name="Confalonieri F."/>
            <person name="Zivanovic Y."/>
            <person name="Allard G."/>
            <person name="Awayez M.J."/>
            <person name="Chan-Weiher C.C.-Y."/>
            <person name="Clausen I.G."/>
            <person name="Curtis B.A."/>
            <person name="De Moors A."/>
            <person name="Erauso G."/>
            <person name="Fletcher C."/>
            <person name="Gordon P.M.K."/>
            <person name="Heikamp-de Jong I."/>
            <person name="Jeffries A.C."/>
            <person name="Kozera C.J."/>
            <person name="Medina N."/>
            <person name="Peng X."/>
            <person name="Thi-Ngoc H.P."/>
            <person name="Redder P."/>
            <person name="Schenk M.E."/>
            <person name="Theriault C."/>
            <person name="Tolstrup N."/>
            <person name="Charlebois R.L."/>
            <person name="Doolittle W.F."/>
            <person name="Duguet M."/>
            <person name="Gaasterland T."/>
            <person name="Garrett R.A."/>
            <person name="Ragan M.A."/>
            <person name="Sensen C.W."/>
            <person name="Van der Oost J."/>
        </authorList>
    </citation>
    <scope>NUCLEOTIDE SEQUENCE [LARGE SCALE GENOMIC DNA]</scope>
    <source>
        <strain>ATCC 35092 / DSM 1617 / JCM 11322 / P2</strain>
    </source>
</reference>
<feature type="chain" id="PRO_0000117325" description="A-type ATP synthase subunit E">
    <location>
        <begin position="1"/>
        <end position="194"/>
    </location>
</feature>
<organism>
    <name type="scientific">Saccharolobus solfataricus (strain ATCC 35092 / DSM 1617 / JCM 11322 / P2)</name>
    <name type="common">Sulfolobus solfataricus</name>
    <dbReference type="NCBI Taxonomy" id="273057"/>
    <lineage>
        <taxon>Archaea</taxon>
        <taxon>Thermoproteota</taxon>
        <taxon>Thermoprotei</taxon>
        <taxon>Sulfolobales</taxon>
        <taxon>Sulfolobaceae</taxon>
        <taxon>Saccharolobus</taxon>
    </lineage>
</organism>
<proteinExistence type="inferred from homology"/>
<keyword id="KW-0066">ATP synthesis</keyword>
<keyword id="KW-1003">Cell membrane</keyword>
<keyword id="KW-0375">Hydrogen ion transport</keyword>
<keyword id="KW-0406">Ion transport</keyword>
<keyword id="KW-0472">Membrane</keyword>
<keyword id="KW-1185">Reference proteome</keyword>
<keyword id="KW-0813">Transport</keyword>
<comment type="function">
    <text evidence="1">Component of the A-type ATP synthase that produces ATP from ADP in the presence of a proton gradient across the membrane.</text>
</comment>
<comment type="subunit">
    <text evidence="1">Has multiple subunits with at least A(3), B(3), C, D, E, F, H, I and proteolipid K(x).</text>
</comment>
<comment type="subcellular location">
    <subcellularLocation>
        <location evidence="1">Cell membrane</location>
        <topology evidence="1">Peripheral membrane protein</topology>
    </subcellularLocation>
</comment>
<comment type="similarity">
    <text evidence="1">Belongs to the V-ATPase E subunit family.</text>
</comment>
<sequence length="194" mass="22633">MDFEQLLDKSLNKVREEIKTELSKSLDEAIKLLNEGHNKIVQEYSQRINELIVKTKEEIEGEKARLEVENKRTLLVEKEYWINKVYERVLGKIGEVVKTKEYKDAIENIISKEIKEIREEKVTIYCSPNDKLMIEKIVGNNKNVTVKTDEKMLGGIKIYFERSGLTRDFSLKLILDQVFDSMRGKISDMLFGGK</sequence>
<evidence type="ECO:0000255" key="1">
    <source>
        <dbReference type="HAMAP-Rule" id="MF_00311"/>
    </source>
</evidence>
<gene>
    <name evidence="1" type="primary">atpE</name>
    <name type="ordered locus">SSO0561</name>
</gene>
<dbReference type="EMBL" id="Y18930">
    <property type="protein sequence ID" value="CAB57738.1"/>
    <property type="molecule type" value="Genomic_DNA"/>
</dbReference>
<dbReference type="EMBL" id="AE006641">
    <property type="protein sequence ID" value="AAK40878.1"/>
    <property type="molecule type" value="Genomic_DNA"/>
</dbReference>
<dbReference type="PIR" id="G90202">
    <property type="entry name" value="G90202"/>
</dbReference>
<dbReference type="RefSeq" id="WP_009991072.1">
    <property type="nucleotide sequence ID" value="NC_002754.1"/>
</dbReference>
<dbReference type="SMR" id="Q9UWW5"/>
<dbReference type="FunCoup" id="Q9UWW5">
    <property type="interactions" value="128"/>
</dbReference>
<dbReference type="STRING" id="273057.SSO0561"/>
<dbReference type="PaxDb" id="273057-SSO0561"/>
<dbReference type="EnsemblBacteria" id="AAK40878">
    <property type="protein sequence ID" value="AAK40878"/>
    <property type="gene ID" value="SSO0561"/>
</dbReference>
<dbReference type="KEGG" id="sso:SSO0561"/>
<dbReference type="PATRIC" id="fig|273057.12.peg.571"/>
<dbReference type="eggNOG" id="arCOG00869">
    <property type="taxonomic scope" value="Archaea"/>
</dbReference>
<dbReference type="HOGENOM" id="CLU_1412391_0_0_2"/>
<dbReference type="InParanoid" id="Q9UWW5"/>
<dbReference type="Proteomes" id="UP000001974">
    <property type="component" value="Chromosome"/>
</dbReference>
<dbReference type="GO" id="GO:0005886">
    <property type="term" value="C:plasma membrane"/>
    <property type="evidence" value="ECO:0007669"/>
    <property type="project" value="UniProtKB-SubCell"/>
</dbReference>
<dbReference type="GO" id="GO:0033178">
    <property type="term" value="C:proton-transporting two-sector ATPase complex, catalytic domain"/>
    <property type="evidence" value="ECO:0007669"/>
    <property type="project" value="InterPro"/>
</dbReference>
<dbReference type="GO" id="GO:0005524">
    <property type="term" value="F:ATP binding"/>
    <property type="evidence" value="ECO:0007669"/>
    <property type="project" value="UniProtKB-UniRule"/>
</dbReference>
<dbReference type="GO" id="GO:0046933">
    <property type="term" value="F:proton-transporting ATP synthase activity, rotational mechanism"/>
    <property type="evidence" value="ECO:0007669"/>
    <property type="project" value="UniProtKB-UniRule"/>
</dbReference>
<dbReference type="GO" id="GO:0046961">
    <property type="term" value="F:proton-transporting ATPase activity, rotational mechanism"/>
    <property type="evidence" value="ECO:0007669"/>
    <property type="project" value="InterPro"/>
</dbReference>
<dbReference type="GO" id="GO:0042777">
    <property type="term" value="P:proton motive force-driven plasma membrane ATP synthesis"/>
    <property type="evidence" value="ECO:0007669"/>
    <property type="project" value="UniProtKB-UniRule"/>
</dbReference>
<dbReference type="Gene3D" id="3.30.2320.30">
    <property type="entry name" value="ATP synthase, E subunit, C-terminal"/>
    <property type="match status" value="1"/>
</dbReference>
<dbReference type="HAMAP" id="MF_00311">
    <property type="entry name" value="ATP_synth_E_arch"/>
    <property type="match status" value="1"/>
</dbReference>
<dbReference type="InterPro" id="IPR038495">
    <property type="entry name" value="ATPase_E_C"/>
</dbReference>
<dbReference type="InterPro" id="IPR002842">
    <property type="entry name" value="ATPase_V1_Esu"/>
</dbReference>
<dbReference type="Pfam" id="PF01991">
    <property type="entry name" value="vATP-synt_E"/>
    <property type="match status" value="1"/>
</dbReference>
<dbReference type="SUPFAM" id="SSF160527">
    <property type="entry name" value="V-type ATPase subunit E-like"/>
    <property type="match status" value="1"/>
</dbReference>
<protein>
    <recommendedName>
        <fullName evidence="1">A-type ATP synthase subunit E</fullName>
    </recommendedName>
</protein>